<feature type="chain" id="PRO_1000077655" description="GTPase Der">
    <location>
        <begin position="1"/>
        <end position="443"/>
    </location>
</feature>
<feature type="domain" description="EngA-type G 1">
    <location>
        <begin position="3"/>
        <end position="167"/>
    </location>
</feature>
<feature type="domain" description="EngA-type G 2">
    <location>
        <begin position="176"/>
        <end position="349"/>
    </location>
</feature>
<feature type="domain" description="KH-like" evidence="1">
    <location>
        <begin position="350"/>
        <end position="434"/>
    </location>
</feature>
<feature type="binding site" evidence="1">
    <location>
        <begin position="9"/>
        <end position="16"/>
    </location>
    <ligand>
        <name>GTP</name>
        <dbReference type="ChEBI" id="CHEBI:37565"/>
        <label>1</label>
    </ligand>
</feature>
<feature type="binding site" evidence="1">
    <location>
        <begin position="56"/>
        <end position="60"/>
    </location>
    <ligand>
        <name>GTP</name>
        <dbReference type="ChEBI" id="CHEBI:37565"/>
        <label>1</label>
    </ligand>
</feature>
<feature type="binding site" evidence="1">
    <location>
        <begin position="119"/>
        <end position="122"/>
    </location>
    <ligand>
        <name>GTP</name>
        <dbReference type="ChEBI" id="CHEBI:37565"/>
        <label>1</label>
    </ligand>
</feature>
<feature type="binding site" evidence="1">
    <location>
        <begin position="182"/>
        <end position="189"/>
    </location>
    <ligand>
        <name>GTP</name>
        <dbReference type="ChEBI" id="CHEBI:37565"/>
        <label>2</label>
    </ligand>
</feature>
<feature type="binding site" evidence="1">
    <location>
        <begin position="229"/>
        <end position="233"/>
    </location>
    <ligand>
        <name>GTP</name>
        <dbReference type="ChEBI" id="CHEBI:37565"/>
        <label>2</label>
    </ligand>
</feature>
<feature type="binding site" evidence="1">
    <location>
        <begin position="294"/>
        <end position="297"/>
    </location>
    <ligand>
        <name>GTP</name>
        <dbReference type="ChEBI" id="CHEBI:37565"/>
        <label>2</label>
    </ligand>
</feature>
<keyword id="KW-0342">GTP-binding</keyword>
<keyword id="KW-0547">Nucleotide-binding</keyword>
<keyword id="KW-0677">Repeat</keyword>
<keyword id="KW-0690">Ribosome biogenesis</keyword>
<reference key="1">
    <citation type="journal article" date="2009" name="Infect. Immun.">
        <title>Comparative genomics reveal extensive transposon-mediated genomic plasticity and diversity among potential effector proteins within the genus Coxiella.</title>
        <authorList>
            <person name="Beare P.A."/>
            <person name="Unsworth N."/>
            <person name="Andoh M."/>
            <person name="Voth D.E."/>
            <person name="Omsland A."/>
            <person name="Gilk S.D."/>
            <person name="Williams K.P."/>
            <person name="Sobral B.W."/>
            <person name="Kupko J.J. III"/>
            <person name="Porcella S.F."/>
            <person name="Samuel J.E."/>
            <person name="Heinzen R.A."/>
        </authorList>
    </citation>
    <scope>NUCLEOTIDE SEQUENCE [LARGE SCALE GENOMIC DNA]</scope>
    <source>
        <strain>Dugway 5J108-111</strain>
    </source>
</reference>
<gene>
    <name evidence="1" type="primary">der</name>
    <name type="synonym">engA</name>
    <name type="ordered locus">CBUD_1329</name>
</gene>
<proteinExistence type="inferred from homology"/>
<protein>
    <recommendedName>
        <fullName evidence="1">GTPase Der</fullName>
    </recommendedName>
    <alternativeName>
        <fullName evidence="1">GTP-binding protein EngA</fullName>
    </alternativeName>
</protein>
<accession>A9KFU3</accession>
<organism>
    <name type="scientific">Coxiella burnetii (strain Dugway 5J108-111)</name>
    <dbReference type="NCBI Taxonomy" id="434922"/>
    <lineage>
        <taxon>Bacteria</taxon>
        <taxon>Pseudomonadati</taxon>
        <taxon>Pseudomonadota</taxon>
        <taxon>Gammaproteobacteria</taxon>
        <taxon>Legionellales</taxon>
        <taxon>Coxiellaceae</taxon>
        <taxon>Coxiella</taxon>
    </lineage>
</organism>
<dbReference type="EMBL" id="CP000733">
    <property type="protein sequence ID" value="ABS77043.1"/>
    <property type="molecule type" value="Genomic_DNA"/>
</dbReference>
<dbReference type="RefSeq" id="WP_005770802.1">
    <property type="nucleotide sequence ID" value="NC_009727.1"/>
</dbReference>
<dbReference type="SMR" id="A9KFU3"/>
<dbReference type="KEGG" id="cbd:CBUD_1329"/>
<dbReference type="HOGENOM" id="CLU_016077_6_2_6"/>
<dbReference type="Proteomes" id="UP000008555">
    <property type="component" value="Chromosome"/>
</dbReference>
<dbReference type="GO" id="GO:0005525">
    <property type="term" value="F:GTP binding"/>
    <property type="evidence" value="ECO:0007669"/>
    <property type="project" value="UniProtKB-UniRule"/>
</dbReference>
<dbReference type="GO" id="GO:0043022">
    <property type="term" value="F:ribosome binding"/>
    <property type="evidence" value="ECO:0007669"/>
    <property type="project" value="TreeGrafter"/>
</dbReference>
<dbReference type="GO" id="GO:0042254">
    <property type="term" value="P:ribosome biogenesis"/>
    <property type="evidence" value="ECO:0007669"/>
    <property type="project" value="UniProtKB-KW"/>
</dbReference>
<dbReference type="CDD" id="cd01894">
    <property type="entry name" value="EngA1"/>
    <property type="match status" value="1"/>
</dbReference>
<dbReference type="CDD" id="cd01895">
    <property type="entry name" value="EngA2"/>
    <property type="match status" value="1"/>
</dbReference>
<dbReference type="FunFam" id="3.30.300.20:FF:000004">
    <property type="entry name" value="GTPase Der"/>
    <property type="match status" value="1"/>
</dbReference>
<dbReference type="FunFam" id="3.40.50.300:FF:000040">
    <property type="entry name" value="GTPase Der"/>
    <property type="match status" value="1"/>
</dbReference>
<dbReference type="FunFam" id="3.40.50.300:FF:000057">
    <property type="entry name" value="GTPase Der"/>
    <property type="match status" value="1"/>
</dbReference>
<dbReference type="Gene3D" id="3.30.300.20">
    <property type="match status" value="1"/>
</dbReference>
<dbReference type="Gene3D" id="3.40.50.300">
    <property type="entry name" value="P-loop containing nucleotide triphosphate hydrolases"/>
    <property type="match status" value="2"/>
</dbReference>
<dbReference type="HAMAP" id="MF_00195">
    <property type="entry name" value="GTPase_Der"/>
    <property type="match status" value="1"/>
</dbReference>
<dbReference type="InterPro" id="IPR031166">
    <property type="entry name" value="G_ENGA"/>
</dbReference>
<dbReference type="InterPro" id="IPR006073">
    <property type="entry name" value="GTP-bd"/>
</dbReference>
<dbReference type="InterPro" id="IPR016484">
    <property type="entry name" value="GTPase_Der"/>
</dbReference>
<dbReference type="InterPro" id="IPR032859">
    <property type="entry name" value="KH_dom-like"/>
</dbReference>
<dbReference type="InterPro" id="IPR015946">
    <property type="entry name" value="KH_dom-like_a/b"/>
</dbReference>
<dbReference type="InterPro" id="IPR027417">
    <property type="entry name" value="P-loop_NTPase"/>
</dbReference>
<dbReference type="InterPro" id="IPR005225">
    <property type="entry name" value="Small_GTP-bd"/>
</dbReference>
<dbReference type="NCBIfam" id="TIGR03594">
    <property type="entry name" value="GTPase_EngA"/>
    <property type="match status" value="1"/>
</dbReference>
<dbReference type="NCBIfam" id="TIGR00231">
    <property type="entry name" value="small_GTP"/>
    <property type="match status" value="2"/>
</dbReference>
<dbReference type="PANTHER" id="PTHR43834">
    <property type="entry name" value="GTPASE DER"/>
    <property type="match status" value="1"/>
</dbReference>
<dbReference type="PANTHER" id="PTHR43834:SF6">
    <property type="entry name" value="GTPASE DER"/>
    <property type="match status" value="1"/>
</dbReference>
<dbReference type="Pfam" id="PF14714">
    <property type="entry name" value="KH_dom-like"/>
    <property type="match status" value="1"/>
</dbReference>
<dbReference type="Pfam" id="PF01926">
    <property type="entry name" value="MMR_HSR1"/>
    <property type="match status" value="2"/>
</dbReference>
<dbReference type="PIRSF" id="PIRSF006485">
    <property type="entry name" value="GTP-binding_EngA"/>
    <property type="match status" value="1"/>
</dbReference>
<dbReference type="PRINTS" id="PR00326">
    <property type="entry name" value="GTP1OBG"/>
</dbReference>
<dbReference type="SUPFAM" id="SSF52540">
    <property type="entry name" value="P-loop containing nucleoside triphosphate hydrolases"/>
    <property type="match status" value="2"/>
</dbReference>
<dbReference type="PROSITE" id="PS51712">
    <property type="entry name" value="G_ENGA"/>
    <property type="match status" value="2"/>
</dbReference>
<name>DER_COXBN</name>
<evidence type="ECO:0000255" key="1">
    <source>
        <dbReference type="HAMAP-Rule" id="MF_00195"/>
    </source>
</evidence>
<sequence length="443" mass="49707">MLPVIAIVGRPNVGKSTLFNYLTKSRAALVADVPGVTRDRQYGETTIDSQRLLLVDTGGLVDTENKEVAPLAETQVEQAIDESDCILFLVDAKAGLVPADEIIAERLRKKGKKIFLAVNKADRARAAVVQSDFYKLGFGEPYVIAAASGRGVKDLMTQVLENLPEEKEVIEKEVGIKIAMIGRPNVGKSTLINRLLGEERVIVYDQPGTTRDSIYIPFARNDENYTLIDTAGIRRRAKIQDYVEKFSMIKSLQAMHAADVVIFLLDARQGVTEQDLRLLNRIVEAGVSLIIAVNKWDGLNIEERDNVRNAIDRRMPFVDFARRYFISALHGTGVGKLFRAIQESYQSIQQELTTGQLTRALEKAVAEHEPPLVKGRRIRLRYAHLGARHPLTIVVHGKQTKSLPQSYSRYLANYFRKTFNFIGVPVHIKLKTDPNPYEGQEER</sequence>
<comment type="function">
    <text evidence="1">GTPase that plays an essential role in the late steps of ribosome biogenesis.</text>
</comment>
<comment type="subunit">
    <text evidence="1">Associates with the 50S ribosomal subunit.</text>
</comment>
<comment type="similarity">
    <text evidence="1">Belongs to the TRAFAC class TrmE-Era-EngA-EngB-Septin-like GTPase superfamily. EngA (Der) GTPase family.</text>
</comment>